<name>Y759_METJA</name>
<gene>
    <name type="ordered locus">MJ0759</name>
</gene>
<evidence type="ECO:0000255" key="1"/>
<evidence type="ECO:0000305" key="2"/>
<protein>
    <recommendedName>
        <fullName>Uncharacterized protein MJ0759</fullName>
    </recommendedName>
</protein>
<feature type="chain" id="PRO_0000107018" description="Uncharacterized protein MJ0759">
    <location>
        <begin position="1"/>
        <end position="118"/>
    </location>
</feature>
<feature type="transmembrane region" description="Helical" evidence="1">
    <location>
        <begin position="12"/>
        <end position="32"/>
    </location>
</feature>
<feature type="transmembrane region" description="Helical" evidence="1">
    <location>
        <begin position="39"/>
        <end position="59"/>
    </location>
</feature>
<feature type="transmembrane region" description="Helical" evidence="1">
    <location>
        <begin position="63"/>
        <end position="83"/>
    </location>
</feature>
<feature type="transmembrane region" description="Helical" evidence="1">
    <location>
        <begin position="98"/>
        <end position="118"/>
    </location>
</feature>
<proteinExistence type="predicted"/>
<accession>Q58169</accession>
<sequence>MVIKKGEIMNEIISLVSLSVIFGAMLSGFATFRLTGMRLMPHFASLMIAFILTLASLFISNNIIGYLAIAFQVITPLTVCPTICNILKTQFQNTGIYSAHLALMGMMFILALGNVILF</sequence>
<organism>
    <name type="scientific">Methanocaldococcus jannaschii (strain ATCC 43067 / DSM 2661 / JAL-1 / JCM 10045 / NBRC 100440)</name>
    <name type="common">Methanococcus jannaschii</name>
    <dbReference type="NCBI Taxonomy" id="243232"/>
    <lineage>
        <taxon>Archaea</taxon>
        <taxon>Methanobacteriati</taxon>
        <taxon>Methanobacteriota</taxon>
        <taxon>Methanomada group</taxon>
        <taxon>Methanococci</taxon>
        <taxon>Methanococcales</taxon>
        <taxon>Methanocaldococcaceae</taxon>
        <taxon>Methanocaldococcus</taxon>
    </lineage>
</organism>
<comment type="subcellular location">
    <subcellularLocation>
        <location evidence="2">Cell membrane</location>
        <topology evidence="2">Multi-pass membrane protein</topology>
    </subcellularLocation>
</comment>
<dbReference type="EMBL" id="L77117">
    <property type="protein sequence ID" value="AAB98750.1"/>
    <property type="molecule type" value="Genomic_DNA"/>
</dbReference>
<dbReference type="PIR" id="G64394">
    <property type="entry name" value="G64394"/>
</dbReference>
<dbReference type="SMR" id="Q58169"/>
<dbReference type="FunCoup" id="Q58169">
    <property type="interactions" value="2"/>
</dbReference>
<dbReference type="STRING" id="243232.MJ_0759"/>
<dbReference type="PaxDb" id="243232-MJ_0759"/>
<dbReference type="EnsemblBacteria" id="AAB98750">
    <property type="protein sequence ID" value="AAB98750"/>
    <property type="gene ID" value="MJ_0759"/>
</dbReference>
<dbReference type="KEGG" id="mja:MJ_0759"/>
<dbReference type="eggNOG" id="arCOG04884">
    <property type="taxonomic scope" value="Archaea"/>
</dbReference>
<dbReference type="HOGENOM" id="CLU_2177897_0_0_2"/>
<dbReference type="InParanoid" id="Q58169"/>
<dbReference type="Proteomes" id="UP000000805">
    <property type="component" value="Chromosome"/>
</dbReference>
<dbReference type="GO" id="GO:0005886">
    <property type="term" value="C:plasma membrane"/>
    <property type="evidence" value="ECO:0007669"/>
    <property type="project" value="UniProtKB-SubCell"/>
</dbReference>
<dbReference type="InterPro" id="IPR035350">
    <property type="entry name" value="DUF5400"/>
</dbReference>
<dbReference type="Pfam" id="PF17379">
    <property type="entry name" value="DUF5400"/>
    <property type="match status" value="1"/>
</dbReference>
<keyword id="KW-1003">Cell membrane</keyword>
<keyword id="KW-0472">Membrane</keyword>
<keyword id="KW-1185">Reference proteome</keyword>
<keyword id="KW-0812">Transmembrane</keyword>
<keyword id="KW-1133">Transmembrane helix</keyword>
<reference key="1">
    <citation type="journal article" date="1996" name="Science">
        <title>Complete genome sequence of the methanogenic archaeon, Methanococcus jannaschii.</title>
        <authorList>
            <person name="Bult C.J."/>
            <person name="White O."/>
            <person name="Olsen G.J."/>
            <person name="Zhou L."/>
            <person name="Fleischmann R.D."/>
            <person name="Sutton G.G."/>
            <person name="Blake J.A."/>
            <person name="FitzGerald L.M."/>
            <person name="Clayton R.A."/>
            <person name="Gocayne J.D."/>
            <person name="Kerlavage A.R."/>
            <person name="Dougherty B.A."/>
            <person name="Tomb J.-F."/>
            <person name="Adams M.D."/>
            <person name="Reich C.I."/>
            <person name="Overbeek R."/>
            <person name="Kirkness E.F."/>
            <person name="Weinstock K.G."/>
            <person name="Merrick J.M."/>
            <person name="Glodek A."/>
            <person name="Scott J.L."/>
            <person name="Geoghagen N.S.M."/>
            <person name="Weidman J.F."/>
            <person name="Fuhrmann J.L."/>
            <person name="Nguyen D."/>
            <person name="Utterback T.R."/>
            <person name="Kelley J.M."/>
            <person name="Peterson J.D."/>
            <person name="Sadow P.W."/>
            <person name="Hanna M.C."/>
            <person name="Cotton M.D."/>
            <person name="Roberts K.M."/>
            <person name="Hurst M.A."/>
            <person name="Kaine B.P."/>
            <person name="Borodovsky M."/>
            <person name="Klenk H.-P."/>
            <person name="Fraser C.M."/>
            <person name="Smith H.O."/>
            <person name="Woese C.R."/>
            <person name="Venter J.C."/>
        </authorList>
    </citation>
    <scope>NUCLEOTIDE SEQUENCE [LARGE SCALE GENOMIC DNA]</scope>
    <source>
        <strain>ATCC 43067 / DSM 2661 / JAL-1 / JCM 10045 / NBRC 100440</strain>
    </source>
</reference>